<reference key="1">
    <citation type="journal article" date="2004" name="Proc. Natl. Acad. Sci. U.S.A.">
        <title>Insights into the evolution of Yersinia pestis through whole-genome comparison with Yersinia pseudotuberculosis.</title>
        <authorList>
            <person name="Chain P.S.G."/>
            <person name="Carniel E."/>
            <person name="Larimer F.W."/>
            <person name="Lamerdin J."/>
            <person name="Stoutland P.O."/>
            <person name="Regala W.M."/>
            <person name="Georgescu A.M."/>
            <person name="Vergez L.M."/>
            <person name="Land M.L."/>
            <person name="Motin V.L."/>
            <person name="Brubaker R.R."/>
            <person name="Fowler J."/>
            <person name="Hinnebusch J."/>
            <person name="Marceau M."/>
            <person name="Medigue C."/>
            <person name="Simonet M."/>
            <person name="Chenal-Francisque V."/>
            <person name="Souza B."/>
            <person name="Dacheux D."/>
            <person name="Elliott J.M."/>
            <person name="Derbise A."/>
            <person name="Hauser L.J."/>
            <person name="Garcia E."/>
        </authorList>
    </citation>
    <scope>NUCLEOTIDE SEQUENCE [LARGE SCALE GENOMIC DNA]</scope>
    <source>
        <strain>IP32953</strain>
    </source>
</reference>
<sequence length="148" mass="17175">MSQPPFWQQKTLAEMSDSEWESLCDGCGQCCLNKLIDEDTDEIYFTNVACDQLNIKTCQCSNYERRFELEEDCIKLTRENLVTFAWLPPTCAYRLIGEGHDLPRWHPLLTGSKAAMHGERISVRHIAVRESEVVDWQDHILNKPSWAK</sequence>
<protein>
    <recommendedName>
        <fullName evidence="1">UPF0260 protein YPTB2065</fullName>
    </recommendedName>
</protein>
<feature type="chain" id="PRO_1000044821" description="UPF0260 protein YPTB2065">
    <location>
        <begin position="1"/>
        <end position="148"/>
    </location>
</feature>
<accession>Q66AR5</accession>
<comment type="similarity">
    <text evidence="1">Belongs to the UPF0260 family.</text>
</comment>
<dbReference type="EMBL" id="BX936398">
    <property type="protein sequence ID" value="CAH21303.1"/>
    <property type="molecule type" value="Genomic_DNA"/>
</dbReference>
<dbReference type="RefSeq" id="WP_002211739.1">
    <property type="nucleotide sequence ID" value="NZ_CP009712.1"/>
</dbReference>
<dbReference type="KEGG" id="ypo:BZ17_399"/>
<dbReference type="KEGG" id="yps:YPTB2065"/>
<dbReference type="PATRIC" id="fig|273123.14.peg.427"/>
<dbReference type="Proteomes" id="UP000001011">
    <property type="component" value="Chromosome"/>
</dbReference>
<dbReference type="HAMAP" id="MF_00676">
    <property type="entry name" value="UPF0260"/>
    <property type="match status" value="1"/>
</dbReference>
<dbReference type="InterPro" id="IPR005358">
    <property type="entry name" value="Puta_zinc/iron-chelating_dom"/>
</dbReference>
<dbReference type="InterPro" id="IPR008228">
    <property type="entry name" value="UCP006173"/>
</dbReference>
<dbReference type="NCBIfam" id="NF003498">
    <property type="entry name" value="PRK05170.1-1"/>
    <property type="match status" value="1"/>
</dbReference>
<dbReference type="NCBIfam" id="NF003501">
    <property type="entry name" value="PRK05170.1-5"/>
    <property type="match status" value="1"/>
</dbReference>
<dbReference type="NCBIfam" id="NF003507">
    <property type="entry name" value="PRK05170.2-5"/>
    <property type="match status" value="1"/>
</dbReference>
<dbReference type="PANTHER" id="PTHR37421">
    <property type="entry name" value="UPF0260 PROTEIN YCGN"/>
    <property type="match status" value="1"/>
</dbReference>
<dbReference type="PANTHER" id="PTHR37421:SF1">
    <property type="entry name" value="UPF0260 PROTEIN YCGN"/>
    <property type="match status" value="1"/>
</dbReference>
<dbReference type="Pfam" id="PF03692">
    <property type="entry name" value="CxxCxxCC"/>
    <property type="match status" value="1"/>
</dbReference>
<dbReference type="PIRSF" id="PIRSF006173">
    <property type="entry name" value="UCP006173"/>
    <property type="match status" value="1"/>
</dbReference>
<proteinExistence type="inferred from homology"/>
<gene>
    <name type="ordered locus">YPTB2065</name>
</gene>
<evidence type="ECO:0000255" key="1">
    <source>
        <dbReference type="HAMAP-Rule" id="MF_00676"/>
    </source>
</evidence>
<organism>
    <name type="scientific">Yersinia pseudotuberculosis serotype I (strain IP32953)</name>
    <dbReference type="NCBI Taxonomy" id="273123"/>
    <lineage>
        <taxon>Bacteria</taxon>
        <taxon>Pseudomonadati</taxon>
        <taxon>Pseudomonadota</taxon>
        <taxon>Gammaproteobacteria</taxon>
        <taxon>Enterobacterales</taxon>
        <taxon>Yersiniaceae</taxon>
        <taxon>Yersinia</taxon>
    </lineage>
</organism>
<name>Y2065_YERPS</name>